<keyword id="KW-1185">Reference proteome</keyword>
<keyword id="KW-0687">Ribonucleoprotein</keyword>
<keyword id="KW-0689">Ribosomal protein</keyword>
<keyword id="KW-0694">RNA-binding</keyword>
<keyword id="KW-0699">rRNA-binding</keyword>
<accession>Q6AP54</accession>
<proteinExistence type="inferred from homology"/>
<feature type="chain" id="PRO_0000131256" description="Large ribosomal subunit protein uL18">
    <location>
        <begin position="1"/>
        <end position="121"/>
    </location>
</feature>
<organism>
    <name type="scientific">Desulfotalea psychrophila (strain LSv54 / DSM 12343)</name>
    <dbReference type="NCBI Taxonomy" id="177439"/>
    <lineage>
        <taxon>Bacteria</taxon>
        <taxon>Pseudomonadati</taxon>
        <taxon>Thermodesulfobacteriota</taxon>
        <taxon>Desulfobulbia</taxon>
        <taxon>Desulfobulbales</taxon>
        <taxon>Desulfocapsaceae</taxon>
        <taxon>Desulfotalea</taxon>
    </lineage>
</organism>
<name>RL18_DESPS</name>
<gene>
    <name evidence="1" type="primary">rplR</name>
    <name type="ordered locus">DP1141</name>
</gene>
<comment type="function">
    <text evidence="1">This is one of the proteins that bind and probably mediate the attachment of the 5S RNA into the large ribosomal subunit, where it forms part of the central protuberance.</text>
</comment>
<comment type="subunit">
    <text evidence="1">Part of the 50S ribosomal subunit; part of the 5S rRNA/L5/L18/L25 subcomplex. Contacts the 5S and 23S rRNAs.</text>
</comment>
<comment type="similarity">
    <text evidence="1">Belongs to the universal ribosomal protein uL18 family.</text>
</comment>
<evidence type="ECO:0000255" key="1">
    <source>
        <dbReference type="HAMAP-Rule" id="MF_01337"/>
    </source>
</evidence>
<evidence type="ECO:0000305" key="2"/>
<dbReference type="EMBL" id="CR522870">
    <property type="protein sequence ID" value="CAG35870.1"/>
    <property type="molecule type" value="Genomic_DNA"/>
</dbReference>
<dbReference type="RefSeq" id="WP_011188382.1">
    <property type="nucleotide sequence ID" value="NC_006138.1"/>
</dbReference>
<dbReference type="SMR" id="Q6AP54"/>
<dbReference type="STRING" id="177439.DP1141"/>
<dbReference type="KEGG" id="dps:DP1141"/>
<dbReference type="eggNOG" id="COG0256">
    <property type="taxonomic scope" value="Bacteria"/>
</dbReference>
<dbReference type="HOGENOM" id="CLU_098841_0_1_7"/>
<dbReference type="OrthoDB" id="9810939at2"/>
<dbReference type="Proteomes" id="UP000000602">
    <property type="component" value="Chromosome"/>
</dbReference>
<dbReference type="GO" id="GO:0022625">
    <property type="term" value="C:cytosolic large ribosomal subunit"/>
    <property type="evidence" value="ECO:0007669"/>
    <property type="project" value="TreeGrafter"/>
</dbReference>
<dbReference type="GO" id="GO:0008097">
    <property type="term" value="F:5S rRNA binding"/>
    <property type="evidence" value="ECO:0007669"/>
    <property type="project" value="TreeGrafter"/>
</dbReference>
<dbReference type="GO" id="GO:0003735">
    <property type="term" value="F:structural constituent of ribosome"/>
    <property type="evidence" value="ECO:0007669"/>
    <property type="project" value="InterPro"/>
</dbReference>
<dbReference type="GO" id="GO:0006412">
    <property type="term" value="P:translation"/>
    <property type="evidence" value="ECO:0007669"/>
    <property type="project" value="UniProtKB-UniRule"/>
</dbReference>
<dbReference type="CDD" id="cd00432">
    <property type="entry name" value="Ribosomal_L18_L5e"/>
    <property type="match status" value="1"/>
</dbReference>
<dbReference type="FunFam" id="3.30.420.100:FF:000001">
    <property type="entry name" value="50S ribosomal protein L18"/>
    <property type="match status" value="1"/>
</dbReference>
<dbReference type="Gene3D" id="3.30.420.100">
    <property type="match status" value="1"/>
</dbReference>
<dbReference type="HAMAP" id="MF_01337_B">
    <property type="entry name" value="Ribosomal_uL18_B"/>
    <property type="match status" value="1"/>
</dbReference>
<dbReference type="InterPro" id="IPR004389">
    <property type="entry name" value="Ribosomal_uL18_bac-type"/>
</dbReference>
<dbReference type="InterPro" id="IPR005484">
    <property type="entry name" value="Ribosomal_uL18_bac/euk"/>
</dbReference>
<dbReference type="NCBIfam" id="TIGR00060">
    <property type="entry name" value="L18_bact"/>
    <property type="match status" value="1"/>
</dbReference>
<dbReference type="PANTHER" id="PTHR12899">
    <property type="entry name" value="39S RIBOSOMAL PROTEIN L18, MITOCHONDRIAL"/>
    <property type="match status" value="1"/>
</dbReference>
<dbReference type="PANTHER" id="PTHR12899:SF3">
    <property type="entry name" value="LARGE RIBOSOMAL SUBUNIT PROTEIN UL18M"/>
    <property type="match status" value="1"/>
</dbReference>
<dbReference type="Pfam" id="PF00861">
    <property type="entry name" value="Ribosomal_L18p"/>
    <property type="match status" value="1"/>
</dbReference>
<dbReference type="SUPFAM" id="SSF53137">
    <property type="entry name" value="Translational machinery components"/>
    <property type="match status" value="1"/>
</dbReference>
<reference key="1">
    <citation type="journal article" date="2004" name="Environ. Microbiol.">
        <title>The genome of Desulfotalea psychrophila, a sulfate-reducing bacterium from permanently cold Arctic sediments.</title>
        <authorList>
            <person name="Rabus R."/>
            <person name="Ruepp A."/>
            <person name="Frickey T."/>
            <person name="Rattei T."/>
            <person name="Fartmann B."/>
            <person name="Stark M."/>
            <person name="Bauer M."/>
            <person name="Zibat A."/>
            <person name="Lombardot T."/>
            <person name="Becker I."/>
            <person name="Amann J."/>
            <person name="Gellner K."/>
            <person name="Teeling H."/>
            <person name="Leuschner W.D."/>
            <person name="Gloeckner F.-O."/>
            <person name="Lupas A.N."/>
            <person name="Amann R."/>
            <person name="Klenk H.-P."/>
        </authorList>
    </citation>
    <scope>NUCLEOTIDE SEQUENCE [LARGE SCALE GENOMIC DNA]</scope>
    <source>
        <strain>DSM 12343 / LSv54</strain>
    </source>
</reference>
<sequence length="121" mass="13180">MAKTNLKTLARAKRISRIRKKISGTSERPRLRVFKSNKHIYAQIIDDASGKSLVAMSTVDKQFDLGDESGKTAAAKKVGVVLAERATAAGIKKVIFDRGGYIYHGRVKSLSEGAREGGLDF</sequence>
<protein>
    <recommendedName>
        <fullName evidence="1">Large ribosomal subunit protein uL18</fullName>
    </recommendedName>
    <alternativeName>
        <fullName evidence="2">50S ribosomal protein L18</fullName>
    </alternativeName>
</protein>